<protein>
    <recommendedName>
        <fullName>Mitochondrial zinc maintenance protein 1, mitochondrial</fullName>
    </recommendedName>
</protein>
<accession>B0YEJ3</accession>
<keyword id="KW-0143">Chaperone</keyword>
<keyword id="KW-0496">Mitochondrion</keyword>
<keyword id="KW-0809">Transit peptide</keyword>
<gene>
    <name type="primary">MZM1</name>
    <name type="ORF">AFUB_099380</name>
</gene>
<feature type="transit peptide" description="Mitochondrion" evidence="2">
    <location>
        <begin position="1"/>
        <end position="36"/>
    </location>
</feature>
<feature type="chain" id="PRO_0000405483" description="Mitochondrial zinc maintenance protein 1, mitochondrial">
    <location>
        <begin position="37"/>
        <end position="115"/>
    </location>
</feature>
<feature type="region of interest" description="Disordered" evidence="3">
    <location>
        <begin position="95"/>
        <end position="115"/>
    </location>
</feature>
<comment type="function">
    <text evidence="1">Assembly factor required for Rieske Fe-S protein RIP1 incorporation into the cytochrome b-c1 (CIII) complex. Functions as a chaperone, binding to this subunit within the mitochondrial matrix and stabilizing it prior to its translocation and insertion into the late CIII dimeric intermediate within the mitochondrial inner membrane. Modulates the mitochondrial matrix zinc pool (By similarity).</text>
</comment>
<comment type="subunit">
    <text evidence="1">Interacts with RIP1.</text>
</comment>
<comment type="subcellular location">
    <subcellularLocation>
        <location evidence="1">Mitochondrion matrix</location>
    </subcellularLocation>
</comment>
<comment type="similarity">
    <text evidence="4">Belongs to the complex I LYR family. MZM1 subfamily.</text>
</comment>
<comment type="sequence caution" evidence="4">
    <conflict type="erroneous initiation">
        <sequence resource="EMBL-CDS" id="EDP47337"/>
    </conflict>
    <text>Extended N-terminus.</text>
</comment>
<name>MZM1_ASPFC</name>
<proteinExistence type="inferred from homology"/>
<dbReference type="EMBL" id="DS499603">
    <property type="protein sequence ID" value="EDP47337.1"/>
    <property type="status" value="ALT_INIT"/>
    <property type="molecule type" value="Genomic_DNA"/>
</dbReference>
<dbReference type="SMR" id="B0YEJ3"/>
<dbReference type="OrthoDB" id="27251at5052"/>
<dbReference type="PhylomeDB" id="B0YEJ3"/>
<dbReference type="Proteomes" id="UP000001699">
    <property type="component" value="Unassembled WGS sequence"/>
</dbReference>
<dbReference type="GO" id="GO:0005759">
    <property type="term" value="C:mitochondrial matrix"/>
    <property type="evidence" value="ECO:0007669"/>
    <property type="project" value="UniProtKB-SubCell"/>
</dbReference>
<dbReference type="GO" id="GO:0044183">
    <property type="term" value="F:protein folding chaperone"/>
    <property type="evidence" value="ECO:0007669"/>
    <property type="project" value="TreeGrafter"/>
</dbReference>
<dbReference type="GO" id="GO:0034551">
    <property type="term" value="P:mitochondrial respiratory chain complex III assembly"/>
    <property type="evidence" value="ECO:0007669"/>
    <property type="project" value="InterPro"/>
</dbReference>
<dbReference type="CDD" id="cd20267">
    <property type="entry name" value="Complex1_LYR_LYRM7"/>
    <property type="match status" value="1"/>
</dbReference>
<dbReference type="InterPro" id="IPR045298">
    <property type="entry name" value="Complex1_LYR_LYRM7"/>
</dbReference>
<dbReference type="InterPro" id="IPR050435">
    <property type="entry name" value="MZM1/LYRM7"/>
</dbReference>
<dbReference type="PANTHER" id="PTHR46749">
    <property type="entry name" value="COMPLEX III ASSEMBLY FACTOR LYRM7"/>
    <property type="match status" value="1"/>
</dbReference>
<dbReference type="PANTHER" id="PTHR46749:SF1">
    <property type="entry name" value="COMPLEX III ASSEMBLY FACTOR LYRM7"/>
    <property type="match status" value="1"/>
</dbReference>
<reference key="1">
    <citation type="journal article" date="2008" name="PLoS Genet.">
        <title>Genomic islands in the pathogenic filamentous fungus Aspergillus fumigatus.</title>
        <authorList>
            <person name="Fedorova N.D."/>
            <person name="Khaldi N."/>
            <person name="Joardar V.S."/>
            <person name="Maiti R."/>
            <person name="Amedeo P."/>
            <person name="Anderson M.J."/>
            <person name="Crabtree J."/>
            <person name="Silva J.C."/>
            <person name="Badger J.H."/>
            <person name="Albarraq A."/>
            <person name="Angiuoli S."/>
            <person name="Bussey H."/>
            <person name="Bowyer P."/>
            <person name="Cotty P.J."/>
            <person name="Dyer P.S."/>
            <person name="Egan A."/>
            <person name="Galens K."/>
            <person name="Fraser-Liggett C.M."/>
            <person name="Haas B.J."/>
            <person name="Inman J.M."/>
            <person name="Kent R."/>
            <person name="Lemieux S."/>
            <person name="Malavazi I."/>
            <person name="Orvis J."/>
            <person name="Roemer T."/>
            <person name="Ronning C.M."/>
            <person name="Sundaram J.P."/>
            <person name="Sutton G."/>
            <person name="Turner G."/>
            <person name="Venter J.C."/>
            <person name="White O.R."/>
            <person name="Whitty B.R."/>
            <person name="Youngman P."/>
            <person name="Wolfe K.H."/>
            <person name="Goldman G.H."/>
            <person name="Wortman J.R."/>
            <person name="Jiang B."/>
            <person name="Denning D.W."/>
            <person name="Nierman W.C."/>
        </authorList>
    </citation>
    <scope>NUCLEOTIDE SEQUENCE [LARGE SCALE GENOMIC DNA]</scope>
    <source>
        <strain>CBS 144.89 / FGSC A1163 / CEA10</strain>
    </source>
</reference>
<sequence length="115" mass="13136">MASQTAVTARSAYRQILRATRIAFQDDFRVLVAARQEARRQFDEHRREGIDTPMQINHAKEVAAILRHNIVQGVRDSNDENGKWELRIHDDIERGDNDSIRVGGKKVKVDKPCSA</sequence>
<organism>
    <name type="scientific">Aspergillus fumigatus (strain CBS 144.89 / FGSC A1163 / CEA10)</name>
    <name type="common">Neosartorya fumigata</name>
    <dbReference type="NCBI Taxonomy" id="451804"/>
    <lineage>
        <taxon>Eukaryota</taxon>
        <taxon>Fungi</taxon>
        <taxon>Dikarya</taxon>
        <taxon>Ascomycota</taxon>
        <taxon>Pezizomycotina</taxon>
        <taxon>Eurotiomycetes</taxon>
        <taxon>Eurotiomycetidae</taxon>
        <taxon>Eurotiales</taxon>
        <taxon>Aspergillaceae</taxon>
        <taxon>Aspergillus</taxon>
        <taxon>Aspergillus subgen. Fumigati</taxon>
    </lineage>
</organism>
<evidence type="ECO:0000250" key="1"/>
<evidence type="ECO:0000255" key="2"/>
<evidence type="ECO:0000256" key="3">
    <source>
        <dbReference type="SAM" id="MobiDB-lite"/>
    </source>
</evidence>
<evidence type="ECO:0000305" key="4"/>